<protein>
    <recommendedName>
        <fullName evidence="1">Large ribosomal subunit protein uL1</fullName>
    </recommendedName>
    <alternativeName>
        <fullName evidence="2">50S ribosomal protein L1</fullName>
    </alternativeName>
</protein>
<name>RL1_LEPBJ</name>
<organism>
    <name type="scientific">Leptospira borgpetersenii serovar Hardjo-bovis (strain JB197)</name>
    <dbReference type="NCBI Taxonomy" id="355277"/>
    <lineage>
        <taxon>Bacteria</taxon>
        <taxon>Pseudomonadati</taxon>
        <taxon>Spirochaetota</taxon>
        <taxon>Spirochaetia</taxon>
        <taxon>Leptospirales</taxon>
        <taxon>Leptospiraceae</taxon>
        <taxon>Leptospira</taxon>
    </lineage>
</organism>
<gene>
    <name evidence="1" type="primary">rplA</name>
    <name type="ordered locus">LBJ_2368</name>
</gene>
<dbReference type="EMBL" id="CP000350">
    <property type="protein sequence ID" value="ABJ76834.1"/>
    <property type="molecule type" value="Genomic_DNA"/>
</dbReference>
<dbReference type="RefSeq" id="WP_011671972.1">
    <property type="nucleotide sequence ID" value="NC_008510.1"/>
</dbReference>
<dbReference type="SMR" id="Q04QI6"/>
<dbReference type="KEGG" id="lbj:LBJ_2368"/>
<dbReference type="HOGENOM" id="CLU_062853_0_0_12"/>
<dbReference type="Proteomes" id="UP000000656">
    <property type="component" value="Chromosome 1"/>
</dbReference>
<dbReference type="GO" id="GO:0015934">
    <property type="term" value="C:large ribosomal subunit"/>
    <property type="evidence" value="ECO:0007669"/>
    <property type="project" value="InterPro"/>
</dbReference>
<dbReference type="GO" id="GO:0019843">
    <property type="term" value="F:rRNA binding"/>
    <property type="evidence" value="ECO:0007669"/>
    <property type="project" value="UniProtKB-UniRule"/>
</dbReference>
<dbReference type="GO" id="GO:0003735">
    <property type="term" value="F:structural constituent of ribosome"/>
    <property type="evidence" value="ECO:0007669"/>
    <property type="project" value="InterPro"/>
</dbReference>
<dbReference type="GO" id="GO:0000049">
    <property type="term" value="F:tRNA binding"/>
    <property type="evidence" value="ECO:0007669"/>
    <property type="project" value="UniProtKB-KW"/>
</dbReference>
<dbReference type="GO" id="GO:0006417">
    <property type="term" value="P:regulation of translation"/>
    <property type="evidence" value="ECO:0007669"/>
    <property type="project" value="UniProtKB-KW"/>
</dbReference>
<dbReference type="GO" id="GO:0006412">
    <property type="term" value="P:translation"/>
    <property type="evidence" value="ECO:0007669"/>
    <property type="project" value="UniProtKB-UniRule"/>
</dbReference>
<dbReference type="CDD" id="cd00403">
    <property type="entry name" value="Ribosomal_L1"/>
    <property type="match status" value="1"/>
</dbReference>
<dbReference type="FunFam" id="3.40.50.790:FF:000001">
    <property type="entry name" value="50S ribosomal protein L1"/>
    <property type="match status" value="1"/>
</dbReference>
<dbReference type="Gene3D" id="3.30.190.20">
    <property type="match status" value="1"/>
</dbReference>
<dbReference type="Gene3D" id="3.40.50.790">
    <property type="match status" value="1"/>
</dbReference>
<dbReference type="HAMAP" id="MF_01318_B">
    <property type="entry name" value="Ribosomal_uL1_B"/>
    <property type="match status" value="1"/>
</dbReference>
<dbReference type="InterPro" id="IPR005878">
    <property type="entry name" value="Ribosom_uL1_bac-type"/>
</dbReference>
<dbReference type="InterPro" id="IPR002143">
    <property type="entry name" value="Ribosomal_uL1"/>
</dbReference>
<dbReference type="InterPro" id="IPR023674">
    <property type="entry name" value="Ribosomal_uL1-like"/>
</dbReference>
<dbReference type="InterPro" id="IPR028364">
    <property type="entry name" value="Ribosomal_uL1/biogenesis"/>
</dbReference>
<dbReference type="InterPro" id="IPR016095">
    <property type="entry name" value="Ribosomal_uL1_3-a/b-sand"/>
</dbReference>
<dbReference type="InterPro" id="IPR023673">
    <property type="entry name" value="Ribosomal_uL1_CS"/>
</dbReference>
<dbReference type="NCBIfam" id="TIGR01169">
    <property type="entry name" value="rplA_bact"/>
    <property type="match status" value="1"/>
</dbReference>
<dbReference type="PANTHER" id="PTHR36427">
    <property type="entry name" value="54S RIBOSOMAL PROTEIN L1, MITOCHONDRIAL"/>
    <property type="match status" value="1"/>
</dbReference>
<dbReference type="PANTHER" id="PTHR36427:SF3">
    <property type="entry name" value="LARGE RIBOSOMAL SUBUNIT PROTEIN UL1M"/>
    <property type="match status" value="1"/>
</dbReference>
<dbReference type="Pfam" id="PF00687">
    <property type="entry name" value="Ribosomal_L1"/>
    <property type="match status" value="1"/>
</dbReference>
<dbReference type="PIRSF" id="PIRSF002155">
    <property type="entry name" value="Ribosomal_L1"/>
    <property type="match status" value="1"/>
</dbReference>
<dbReference type="SUPFAM" id="SSF56808">
    <property type="entry name" value="Ribosomal protein L1"/>
    <property type="match status" value="1"/>
</dbReference>
<dbReference type="PROSITE" id="PS01199">
    <property type="entry name" value="RIBOSOMAL_L1"/>
    <property type="match status" value="1"/>
</dbReference>
<reference key="1">
    <citation type="journal article" date="2006" name="Proc. Natl. Acad. Sci. U.S.A.">
        <title>Genome reduction in Leptospira borgpetersenii reflects limited transmission potential.</title>
        <authorList>
            <person name="Bulach D.M."/>
            <person name="Zuerner R.L."/>
            <person name="Wilson P."/>
            <person name="Seemann T."/>
            <person name="McGrath A."/>
            <person name="Cullen P.A."/>
            <person name="Davis J."/>
            <person name="Johnson M."/>
            <person name="Kuczek E."/>
            <person name="Alt D.P."/>
            <person name="Peterson-Burch B."/>
            <person name="Coppel R.L."/>
            <person name="Rood J.I."/>
            <person name="Davies J.K."/>
            <person name="Adler B."/>
        </authorList>
    </citation>
    <scope>NUCLEOTIDE SEQUENCE [LARGE SCALE GENOMIC DNA]</scope>
    <source>
        <strain>JB197</strain>
    </source>
</reference>
<sequence length="230" mass="24902">MQRGKKYKALKEKVDSTKFFNIDQAVELAKSTSYTKFDGTVEIATKVDYKSLQNIRGTISLPHGNGKKVRVLVFCKGDKQNDAKAAGAEFVGDMDLIEKVAGGWTDFDACVATPDMMKDVGKLGPILGRKGLMPKPKAGTVTTDVAKAVNELKSGRVEYRPDKGGVVHLGVGKVSFDNAKLVENIRTVVQTLMRDKPSDAKGDYLKTFSVSPTMGVGVKVDVKELVNTSI</sequence>
<feature type="chain" id="PRO_0000308037" description="Large ribosomal subunit protein uL1">
    <location>
        <begin position="1"/>
        <end position="230"/>
    </location>
</feature>
<accession>Q04QI6</accession>
<keyword id="KW-0678">Repressor</keyword>
<keyword id="KW-0687">Ribonucleoprotein</keyword>
<keyword id="KW-0689">Ribosomal protein</keyword>
<keyword id="KW-0694">RNA-binding</keyword>
<keyword id="KW-0699">rRNA-binding</keyword>
<keyword id="KW-0810">Translation regulation</keyword>
<keyword id="KW-0820">tRNA-binding</keyword>
<comment type="function">
    <text evidence="1">Binds directly to 23S rRNA. The L1 stalk is quite mobile in the ribosome, and is involved in E site tRNA release.</text>
</comment>
<comment type="function">
    <text evidence="1">Protein L1 is also a translational repressor protein, it controls the translation of the L11 operon by binding to its mRNA.</text>
</comment>
<comment type="subunit">
    <text evidence="1">Part of the 50S ribosomal subunit.</text>
</comment>
<comment type="similarity">
    <text evidence="1">Belongs to the universal ribosomal protein uL1 family.</text>
</comment>
<evidence type="ECO:0000255" key="1">
    <source>
        <dbReference type="HAMAP-Rule" id="MF_01318"/>
    </source>
</evidence>
<evidence type="ECO:0000305" key="2"/>
<proteinExistence type="inferred from homology"/>